<organism>
    <name type="scientific">Clostridium botulinum (strain Langeland / NCTC 10281 / Type F)</name>
    <dbReference type="NCBI Taxonomy" id="441772"/>
    <lineage>
        <taxon>Bacteria</taxon>
        <taxon>Bacillati</taxon>
        <taxon>Bacillota</taxon>
        <taxon>Clostridia</taxon>
        <taxon>Eubacteriales</taxon>
        <taxon>Clostridiaceae</taxon>
        <taxon>Clostridium</taxon>
    </lineage>
</organism>
<reference key="1">
    <citation type="submission" date="2007-06" db="EMBL/GenBank/DDBJ databases">
        <authorList>
            <person name="Brinkac L.M."/>
            <person name="Daugherty S."/>
            <person name="Dodson R.J."/>
            <person name="Madupu R."/>
            <person name="Brown J.L."/>
            <person name="Bruce D."/>
            <person name="Detter C."/>
            <person name="Munk C."/>
            <person name="Smith L.A."/>
            <person name="Smith T.J."/>
            <person name="White O."/>
            <person name="Brettin T.S."/>
        </authorList>
    </citation>
    <scope>NUCLEOTIDE SEQUENCE [LARGE SCALE GENOMIC DNA]</scope>
    <source>
        <strain>Langeland / NCTC 10281 / Type F</strain>
    </source>
</reference>
<keyword id="KW-0687">Ribonucleoprotein</keyword>
<keyword id="KW-0689">Ribosomal protein</keyword>
<keyword id="KW-0694">RNA-binding</keyword>
<keyword id="KW-0699">rRNA-binding</keyword>
<proteinExistence type="inferred from homology"/>
<protein>
    <recommendedName>
        <fullName evidence="1">Small ribosomal subunit protein uS19</fullName>
    </recommendedName>
    <alternativeName>
        <fullName evidence="2">30S ribosomal protein S19</fullName>
    </alternativeName>
</protein>
<accession>A7GJ70</accession>
<name>RS19_CLOBL</name>
<comment type="function">
    <text evidence="1">Protein S19 forms a complex with S13 that binds strongly to the 16S ribosomal RNA.</text>
</comment>
<comment type="similarity">
    <text evidence="1">Belongs to the universal ribosomal protein uS19 family.</text>
</comment>
<gene>
    <name evidence="1" type="primary">rpsS</name>
    <name type="ordered locus">CLI_3659</name>
</gene>
<evidence type="ECO:0000255" key="1">
    <source>
        <dbReference type="HAMAP-Rule" id="MF_00531"/>
    </source>
</evidence>
<evidence type="ECO:0000305" key="2"/>
<dbReference type="EMBL" id="CP000728">
    <property type="protein sequence ID" value="ABS41964.1"/>
    <property type="molecule type" value="Genomic_DNA"/>
</dbReference>
<dbReference type="RefSeq" id="WP_003360195.1">
    <property type="nucleotide sequence ID" value="NC_009699.1"/>
</dbReference>
<dbReference type="SMR" id="A7GJ70"/>
<dbReference type="KEGG" id="cbf:CLI_3659"/>
<dbReference type="HOGENOM" id="CLU_144911_0_1_9"/>
<dbReference type="Proteomes" id="UP000002410">
    <property type="component" value="Chromosome"/>
</dbReference>
<dbReference type="GO" id="GO:0005737">
    <property type="term" value="C:cytoplasm"/>
    <property type="evidence" value="ECO:0007669"/>
    <property type="project" value="UniProtKB-ARBA"/>
</dbReference>
<dbReference type="GO" id="GO:0015935">
    <property type="term" value="C:small ribosomal subunit"/>
    <property type="evidence" value="ECO:0007669"/>
    <property type="project" value="InterPro"/>
</dbReference>
<dbReference type="GO" id="GO:0019843">
    <property type="term" value="F:rRNA binding"/>
    <property type="evidence" value="ECO:0007669"/>
    <property type="project" value="UniProtKB-UniRule"/>
</dbReference>
<dbReference type="GO" id="GO:0003735">
    <property type="term" value="F:structural constituent of ribosome"/>
    <property type="evidence" value="ECO:0007669"/>
    <property type="project" value="InterPro"/>
</dbReference>
<dbReference type="GO" id="GO:0000028">
    <property type="term" value="P:ribosomal small subunit assembly"/>
    <property type="evidence" value="ECO:0007669"/>
    <property type="project" value="TreeGrafter"/>
</dbReference>
<dbReference type="GO" id="GO:0006412">
    <property type="term" value="P:translation"/>
    <property type="evidence" value="ECO:0007669"/>
    <property type="project" value="UniProtKB-UniRule"/>
</dbReference>
<dbReference type="FunFam" id="3.30.860.10:FF:000001">
    <property type="entry name" value="30S ribosomal protein S19"/>
    <property type="match status" value="1"/>
</dbReference>
<dbReference type="Gene3D" id="3.30.860.10">
    <property type="entry name" value="30s Ribosomal Protein S19, Chain A"/>
    <property type="match status" value="1"/>
</dbReference>
<dbReference type="HAMAP" id="MF_00531">
    <property type="entry name" value="Ribosomal_uS19"/>
    <property type="match status" value="1"/>
</dbReference>
<dbReference type="InterPro" id="IPR002222">
    <property type="entry name" value="Ribosomal_uS19"/>
</dbReference>
<dbReference type="InterPro" id="IPR005732">
    <property type="entry name" value="Ribosomal_uS19_bac-type"/>
</dbReference>
<dbReference type="InterPro" id="IPR020934">
    <property type="entry name" value="Ribosomal_uS19_CS"/>
</dbReference>
<dbReference type="InterPro" id="IPR023575">
    <property type="entry name" value="Ribosomal_uS19_SF"/>
</dbReference>
<dbReference type="NCBIfam" id="TIGR01050">
    <property type="entry name" value="rpsS_bact"/>
    <property type="match status" value="1"/>
</dbReference>
<dbReference type="PANTHER" id="PTHR11880">
    <property type="entry name" value="RIBOSOMAL PROTEIN S19P FAMILY MEMBER"/>
    <property type="match status" value="1"/>
</dbReference>
<dbReference type="PANTHER" id="PTHR11880:SF8">
    <property type="entry name" value="SMALL RIBOSOMAL SUBUNIT PROTEIN US19M"/>
    <property type="match status" value="1"/>
</dbReference>
<dbReference type="Pfam" id="PF00203">
    <property type="entry name" value="Ribosomal_S19"/>
    <property type="match status" value="1"/>
</dbReference>
<dbReference type="PIRSF" id="PIRSF002144">
    <property type="entry name" value="Ribosomal_S19"/>
    <property type="match status" value="1"/>
</dbReference>
<dbReference type="PRINTS" id="PR00975">
    <property type="entry name" value="RIBOSOMALS19"/>
</dbReference>
<dbReference type="SUPFAM" id="SSF54570">
    <property type="entry name" value="Ribosomal protein S19"/>
    <property type="match status" value="1"/>
</dbReference>
<dbReference type="PROSITE" id="PS00323">
    <property type="entry name" value="RIBOSOMAL_S19"/>
    <property type="match status" value="1"/>
</dbReference>
<sequence>MSRSVKKGPYIQEVLLKRINEMNKNGEKKVLKTWSRSSTIFPQMIGHTIAVHDGRKHVPVYITEDMVGHKLGEFVLTRTYRGHDDKSEKSSRLR</sequence>
<feature type="chain" id="PRO_1000051039" description="Small ribosomal subunit protein uS19">
    <location>
        <begin position="1"/>
        <end position="94"/>
    </location>
</feature>